<comment type="function">
    <text>Ferredoxin are iron-sulfur proteins that transfer electrons in a wide variety of metabolic reactions.</text>
</comment>
<comment type="cofactor">
    <cofactor evidence="1">
        <name>[2Fe-2S] cluster</name>
        <dbReference type="ChEBI" id="CHEBI:190135"/>
    </cofactor>
    <text evidence="1">Binds 1 [2Fe-2S] cluster.</text>
</comment>
<comment type="similarity">
    <text evidence="3">Belongs to the adrenodoxin/putidaredoxin family.</text>
</comment>
<feature type="chain" id="PRO_0000201166" description="2Fe-2S ferredoxin">
    <location>
        <begin position="1"/>
        <end position="111"/>
    </location>
</feature>
<feature type="domain" description="2Fe-2S ferredoxin-type" evidence="2">
    <location>
        <begin position="1"/>
        <end position="104"/>
    </location>
</feature>
<feature type="binding site" evidence="2">
    <location>
        <position position="42"/>
    </location>
    <ligand>
        <name>[2Fe-2S] cluster</name>
        <dbReference type="ChEBI" id="CHEBI:190135"/>
    </ligand>
</feature>
<feature type="binding site" evidence="2">
    <location>
        <position position="48"/>
    </location>
    <ligand>
        <name>[2Fe-2S] cluster</name>
        <dbReference type="ChEBI" id="CHEBI:190135"/>
    </ligand>
</feature>
<feature type="binding site" evidence="2">
    <location>
        <position position="51"/>
    </location>
    <ligand>
        <name>[2Fe-2S] cluster</name>
        <dbReference type="ChEBI" id="CHEBI:190135"/>
    </ligand>
</feature>
<feature type="binding site" evidence="2">
    <location>
        <position position="87"/>
    </location>
    <ligand>
        <name>[2Fe-2S] cluster</name>
        <dbReference type="ChEBI" id="CHEBI:190135"/>
    </ligand>
</feature>
<organism>
    <name type="scientific">Buchnera aphidicola subsp. Schizaphis graminum (strain Sg)</name>
    <dbReference type="NCBI Taxonomy" id="198804"/>
    <lineage>
        <taxon>Bacteria</taxon>
        <taxon>Pseudomonadati</taxon>
        <taxon>Pseudomonadota</taxon>
        <taxon>Gammaproteobacteria</taxon>
        <taxon>Enterobacterales</taxon>
        <taxon>Erwiniaceae</taxon>
        <taxon>Buchnera</taxon>
    </lineage>
</organism>
<evidence type="ECO:0000250" key="1"/>
<evidence type="ECO:0000255" key="2">
    <source>
        <dbReference type="PROSITE-ProRule" id="PRU00465"/>
    </source>
</evidence>
<evidence type="ECO:0000305" key="3"/>
<keyword id="KW-0001">2Fe-2S</keyword>
<keyword id="KW-0249">Electron transport</keyword>
<keyword id="KW-0408">Iron</keyword>
<keyword id="KW-0411">Iron-sulfur</keyword>
<keyword id="KW-0479">Metal-binding</keyword>
<keyword id="KW-0813">Transport</keyword>
<accession>O51882</accession>
<dbReference type="EMBL" id="AF008210">
    <property type="protein sequence ID" value="AAC38120.1"/>
    <property type="molecule type" value="Genomic_DNA"/>
</dbReference>
<dbReference type="EMBL" id="AE013218">
    <property type="protein sequence ID" value="AAM68115.1"/>
    <property type="molecule type" value="Genomic_DNA"/>
</dbReference>
<dbReference type="RefSeq" id="WP_011054081.1">
    <property type="nucleotide sequence ID" value="NC_004061.1"/>
</dbReference>
<dbReference type="SMR" id="O51882"/>
<dbReference type="STRING" id="198804.BUsg_581"/>
<dbReference type="GeneID" id="93004063"/>
<dbReference type="KEGG" id="bas:BUsg_581"/>
<dbReference type="eggNOG" id="COG0633">
    <property type="taxonomic scope" value="Bacteria"/>
</dbReference>
<dbReference type="HOGENOM" id="CLU_082632_5_2_6"/>
<dbReference type="Proteomes" id="UP000000416">
    <property type="component" value="Chromosome"/>
</dbReference>
<dbReference type="GO" id="GO:0005829">
    <property type="term" value="C:cytosol"/>
    <property type="evidence" value="ECO:0007669"/>
    <property type="project" value="TreeGrafter"/>
</dbReference>
<dbReference type="GO" id="GO:0051537">
    <property type="term" value="F:2 iron, 2 sulfur cluster binding"/>
    <property type="evidence" value="ECO:0007669"/>
    <property type="project" value="UniProtKB-KW"/>
</dbReference>
<dbReference type="GO" id="GO:0009055">
    <property type="term" value="F:electron transfer activity"/>
    <property type="evidence" value="ECO:0007669"/>
    <property type="project" value="InterPro"/>
</dbReference>
<dbReference type="GO" id="GO:0046872">
    <property type="term" value="F:metal ion binding"/>
    <property type="evidence" value="ECO:0007669"/>
    <property type="project" value="UniProtKB-KW"/>
</dbReference>
<dbReference type="GO" id="GO:0140647">
    <property type="term" value="P:P450-containing electron transport chain"/>
    <property type="evidence" value="ECO:0007669"/>
    <property type="project" value="InterPro"/>
</dbReference>
<dbReference type="CDD" id="cd00207">
    <property type="entry name" value="fer2"/>
    <property type="match status" value="1"/>
</dbReference>
<dbReference type="Gene3D" id="3.10.20.30">
    <property type="match status" value="1"/>
</dbReference>
<dbReference type="InterPro" id="IPR036010">
    <property type="entry name" value="2Fe-2S_ferredoxin-like_sf"/>
</dbReference>
<dbReference type="InterPro" id="IPR001041">
    <property type="entry name" value="2Fe-2S_ferredoxin-type"/>
</dbReference>
<dbReference type="InterPro" id="IPR001055">
    <property type="entry name" value="Adrenodoxin-like"/>
</dbReference>
<dbReference type="InterPro" id="IPR018298">
    <property type="entry name" value="Adrenodoxin_Fe-S_BS"/>
</dbReference>
<dbReference type="InterPro" id="IPR012675">
    <property type="entry name" value="Beta-grasp_dom_sf"/>
</dbReference>
<dbReference type="InterPro" id="IPR011536">
    <property type="entry name" value="Fdx_isc"/>
</dbReference>
<dbReference type="NCBIfam" id="TIGR02007">
    <property type="entry name" value="fdx_isc"/>
    <property type="match status" value="1"/>
</dbReference>
<dbReference type="PANTHER" id="PTHR23426:SF65">
    <property type="entry name" value="FERREDOXIN-2, MITOCHONDRIAL"/>
    <property type="match status" value="1"/>
</dbReference>
<dbReference type="PANTHER" id="PTHR23426">
    <property type="entry name" value="FERREDOXIN/ADRENODOXIN"/>
    <property type="match status" value="1"/>
</dbReference>
<dbReference type="Pfam" id="PF00111">
    <property type="entry name" value="Fer2"/>
    <property type="match status" value="1"/>
</dbReference>
<dbReference type="PRINTS" id="PR00355">
    <property type="entry name" value="ADRENODOXIN"/>
</dbReference>
<dbReference type="SUPFAM" id="SSF54292">
    <property type="entry name" value="2Fe-2S ferredoxin-like"/>
    <property type="match status" value="1"/>
</dbReference>
<dbReference type="PROSITE" id="PS51085">
    <property type="entry name" value="2FE2S_FER_2"/>
    <property type="match status" value="1"/>
</dbReference>
<dbReference type="PROSITE" id="PS00814">
    <property type="entry name" value="ADX"/>
    <property type="match status" value="1"/>
</dbReference>
<name>FER_BUCAP</name>
<gene>
    <name type="primary">fdx</name>
    <name type="ordered locus">BUsg_581</name>
</gene>
<protein>
    <recommendedName>
        <fullName>2Fe-2S ferredoxin</fullName>
    </recommendedName>
</protein>
<sequence length="111" mass="12459">MPKIFFLPHKLLLPKGGCFECKEGETILNVALKNNIKLEHACEKSCACSTCHCIIRKGFLSLSGWSEKEEDVLDKAWGLESTSRLSCQAIIGNIDIEVQIPLYNTNYIIEN</sequence>
<reference key="1">
    <citation type="journal article" date="1998" name="Curr. Microbiol.">
        <title>Sequence analysis of a 34.7-kb DNA segment from the genome of Buchnera aphidicola (endosymbiont of aphids) containing groEL, dnaA, the atp operon, gidA, and rho.</title>
        <authorList>
            <person name="Clark M.A."/>
            <person name="Baumann L."/>
            <person name="Baumann P."/>
        </authorList>
    </citation>
    <scope>NUCLEOTIDE SEQUENCE [GENOMIC DNA]</scope>
</reference>
<reference key="2">
    <citation type="journal article" date="2002" name="Science">
        <title>50 million years of genomic stasis in endosymbiotic bacteria.</title>
        <authorList>
            <person name="Tamas I."/>
            <person name="Klasson L."/>
            <person name="Canbaeck B."/>
            <person name="Naeslund A.K."/>
            <person name="Eriksson A.-S."/>
            <person name="Wernegreen J.J."/>
            <person name="Sandstroem J.P."/>
            <person name="Moran N.A."/>
            <person name="Andersson S.G.E."/>
        </authorList>
    </citation>
    <scope>NUCLEOTIDE SEQUENCE [LARGE SCALE GENOMIC DNA]</scope>
    <source>
        <strain>Sg</strain>
    </source>
</reference>
<proteinExistence type="inferred from homology"/>